<gene>
    <name evidence="1" type="primary">atpB</name>
    <name type="ordered locus">SF3818</name>
    <name type="ordered locus">S3950</name>
</gene>
<organism>
    <name type="scientific">Shigella flexneri</name>
    <dbReference type="NCBI Taxonomy" id="623"/>
    <lineage>
        <taxon>Bacteria</taxon>
        <taxon>Pseudomonadati</taxon>
        <taxon>Pseudomonadota</taxon>
        <taxon>Gammaproteobacteria</taxon>
        <taxon>Enterobacterales</taxon>
        <taxon>Enterobacteriaceae</taxon>
        <taxon>Shigella</taxon>
    </lineage>
</organism>
<comment type="function">
    <text evidence="1">Key component of the proton channel; it plays a direct role in the translocation of protons across the membrane.</text>
</comment>
<comment type="subunit">
    <text evidence="1">F-type ATPases have 2 components, CF(1) - the catalytic core - and CF(0) - the membrane proton channel. CF(1) has five subunits: alpha(3), beta(3), gamma(1), delta(1), epsilon(1). CF(0) has three main subunits: a(1), b(2) and c(9-12). The alpha and beta chains form an alternating ring which encloses part of the gamma chain. CF(1) is attached to CF(0) by a central stalk formed by the gamma and epsilon chains, while a peripheral stalk is formed by the delta and b chains.</text>
</comment>
<comment type="subcellular location">
    <subcellularLocation>
        <location evidence="1">Cell inner membrane</location>
        <topology evidence="1">Multi-pass membrane protein</topology>
    </subcellularLocation>
</comment>
<comment type="similarity">
    <text evidence="1">Belongs to the ATPase A chain family.</text>
</comment>
<protein>
    <recommendedName>
        <fullName evidence="1">ATP synthase subunit a</fullName>
    </recommendedName>
    <alternativeName>
        <fullName evidence="1">ATP synthase F0 sector subunit a</fullName>
    </alternativeName>
    <alternativeName>
        <fullName evidence="1">F-ATPase subunit 6</fullName>
    </alternativeName>
</protein>
<reference key="1">
    <citation type="journal article" date="2002" name="Nucleic Acids Res.">
        <title>Genome sequence of Shigella flexneri 2a: insights into pathogenicity through comparison with genomes of Escherichia coli K12 and O157.</title>
        <authorList>
            <person name="Jin Q."/>
            <person name="Yuan Z."/>
            <person name="Xu J."/>
            <person name="Wang Y."/>
            <person name="Shen Y."/>
            <person name="Lu W."/>
            <person name="Wang J."/>
            <person name="Liu H."/>
            <person name="Yang J."/>
            <person name="Yang F."/>
            <person name="Zhang X."/>
            <person name="Zhang J."/>
            <person name="Yang G."/>
            <person name="Wu H."/>
            <person name="Qu D."/>
            <person name="Dong J."/>
            <person name="Sun L."/>
            <person name="Xue Y."/>
            <person name="Zhao A."/>
            <person name="Gao Y."/>
            <person name="Zhu J."/>
            <person name="Kan B."/>
            <person name="Ding K."/>
            <person name="Chen S."/>
            <person name="Cheng H."/>
            <person name="Yao Z."/>
            <person name="He B."/>
            <person name="Chen R."/>
            <person name="Ma D."/>
            <person name="Qiang B."/>
            <person name="Wen Y."/>
            <person name="Hou Y."/>
            <person name="Yu J."/>
        </authorList>
    </citation>
    <scope>NUCLEOTIDE SEQUENCE [LARGE SCALE GENOMIC DNA]</scope>
    <source>
        <strain>301 / Serotype 2a</strain>
    </source>
</reference>
<reference key="2">
    <citation type="journal article" date="2003" name="Infect. Immun.">
        <title>Complete genome sequence and comparative genomics of Shigella flexneri serotype 2a strain 2457T.</title>
        <authorList>
            <person name="Wei J."/>
            <person name="Goldberg M.B."/>
            <person name="Burland V."/>
            <person name="Venkatesan M.M."/>
            <person name="Deng W."/>
            <person name="Fournier G."/>
            <person name="Mayhew G.F."/>
            <person name="Plunkett G. III"/>
            <person name="Rose D.J."/>
            <person name="Darling A."/>
            <person name="Mau B."/>
            <person name="Perna N.T."/>
            <person name="Payne S.M."/>
            <person name="Runyen-Janecky L.J."/>
            <person name="Zhou S."/>
            <person name="Schwartz D.C."/>
            <person name="Blattner F.R."/>
        </authorList>
    </citation>
    <scope>NUCLEOTIDE SEQUENCE [LARGE SCALE GENOMIC DNA]</scope>
    <source>
        <strain>ATCC 700930 / 2457T / Serotype 2a</strain>
    </source>
</reference>
<feature type="chain" id="PRO_0000362466" description="ATP synthase subunit a">
    <location>
        <begin position="1"/>
        <end position="271"/>
    </location>
</feature>
<feature type="transmembrane region" description="Helical" evidence="1">
    <location>
        <begin position="40"/>
        <end position="60"/>
    </location>
</feature>
<feature type="transmembrane region" description="Helical" evidence="1">
    <location>
        <begin position="100"/>
        <end position="120"/>
    </location>
</feature>
<feature type="transmembrane region" description="Helical" evidence="1">
    <location>
        <begin position="146"/>
        <end position="166"/>
    </location>
</feature>
<feature type="transmembrane region" description="Helical" evidence="1">
    <location>
        <begin position="220"/>
        <end position="240"/>
    </location>
</feature>
<feature type="transmembrane region" description="Helical" evidence="1">
    <location>
        <begin position="242"/>
        <end position="262"/>
    </location>
</feature>
<evidence type="ECO:0000255" key="1">
    <source>
        <dbReference type="HAMAP-Rule" id="MF_01393"/>
    </source>
</evidence>
<accession>Q83PJ8</accession>
<accession>Q7BZA2</accession>
<keyword id="KW-0066">ATP synthesis</keyword>
<keyword id="KW-0997">Cell inner membrane</keyword>
<keyword id="KW-1003">Cell membrane</keyword>
<keyword id="KW-0138">CF(0)</keyword>
<keyword id="KW-0375">Hydrogen ion transport</keyword>
<keyword id="KW-0406">Ion transport</keyword>
<keyword id="KW-0472">Membrane</keyword>
<keyword id="KW-1185">Reference proteome</keyword>
<keyword id="KW-0812">Transmembrane</keyword>
<keyword id="KW-1133">Transmembrane helix</keyword>
<keyword id="KW-0813">Transport</keyword>
<proteinExistence type="inferred from homology"/>
<name>ATP6_SHIFL</name>
<sequence length="271" mass="30330">MASENMTPQDYIGHHLNNLQLDLRTFSLVDPQNPPATFWTINIDSMFFSVVLGLLFLVLFRSVAKKATSGVPGKFQTAIELVIGFVNGSVKDMYHGKSKLIAPLALTIFVWVFLMNLMDLLPIDLLPYIAEHVLGLPALRVVPSADVNVTLSMALGVFILILFYNIKMKGIGGFTKELTLQPFNHWAFIPVNLILEGVSLLSKPVSLGLRLFGNMYAGELIFILIAGLLPWWSQWILNVPWAIFHILIITLQAFIFMVLTIVYLSMASEEH</sequence>
<dbReference type="EMBL" id="AE005674">
    <property type="protein sequence ID" value="AAN45258.1"/>
    <property type="molecule type" value="Genomic_DNA"/>
</dbReference>
<dbReference type="EMBL" id="AE014073">
    <property type="protein sequence ID" value="AAP18939.1"/>
    <property type="molecule type" value="Genomic_DNA"/>
</dbReference>
<dbReference type="RefSeq" id="NP_709551.1">
    <property type="nucleotide sequence ID" value="NC_004337.2"/>
</dbReference>
<dbReference type="RefSeq" id="WP_000135623.1">
    <property type="nucleotide sequence ID" value="NZ_WPGW01000050.1"/>
</dbReference>
<dbReference type="SMR" id="Q83PJ8"/>
<dbReference type="STRING" id="198214.SF3818"/>
<dbReference type="PaxDb" id="198214-SF3818"/>
<dbReference type="GeneID" id="1026101"/>
<dbReference type="KEGG" id="sfl:SF3818"/>
<dbReference type="KEGG" id="sfx:S3950"/>
<dbReference type="PATRIC" id="fig|198214.7.peg.4505"/>
<dbReference type="HOGENOM" id="CLU_041018_1_0_6"/>
<dbReference type="Proteomes" id="UP000001006">
    <property type="component" value="Chromosome"/>
</dbReference>
<dbReference type="Proteomes" id="UP000002673">
    <property type="component" value="Chromosome"/>
</dbReference>
<dbReference type="GO" id="GO:0005886">
    <property type="term" value="C:plasma membrane"/>
    <property type="evidence" value="ECO:0007669"/>
    <property type="project" value="UniProtKB-SubCell"/>
</dbReference>
<dbReference type="GO" id="GO:0045259">
    <property type="term" value="C:proton-transporting ATP synthase complex"/>
    <property type="evidence" value="ECO:0007669"/>
    <property type="project" value="UniProtKB-KW"/>
</dbReference>
<dbReference type="GO" id="GO:0046933">
    <property type="term" value="F:proton-transporting ATP synthase activity, rotational mechanism"/>
    <property type="evidence" value="ECO:0007669"/>
    <property type="project" value="UniProtKB-UniRule"/>
</dbReference>
<dbReference type="GO" id="GO:0042777">
    <property type="term" value="P:proton motive force-driven plasma membrane ATP synthesis"/>
    <property type="evidence" value="ECO:0007669"/>
    <property type="project" value="TreeGrafter"/>
</dbReference>
<dbReference type="CDD" id="cd00310">
    <property type="entry name" value="ATP-synt_Fo_a_6"/>
    <property type="match status" value="1"/>
</dbReference>
<dbReference type="FunFam" id="1.20.120.220:FF:000002">
    <property type="entry name" value="ATP synthase subunit a"/>
    <property type="match status" value="1"/>
</dbReference>
<dbReference type="Gene3D" id="1.20.120.220">
    <property type="entry name" value="ATP synthase, F0 complex, subunit A"/>
    <property type="match status" value="1"/>
</dbReference>
<dbReference type="HAMAP" id="MF_01393">
    <property type="entry name" value="ATP_synth_a_bact"/>
    <property type="match status" value="1"/>
</dbReference>
<dbReference type="InterPro" id="IPR045082">
    <property type="entry name" value="ATP_syn_F0_a_bact/chloroplast"/>
</dbReference>
<dbReference type="InterPro" id="IPR000568">
    <property type="entry name" value="ATP_synth_F0_asu"/>
</dbReference>
<dbReference type="InterPro" id="IPR023011">
    <property type="entry name" value="ATP_synth_F0_asu_AS"/>
</dbReference>
<dbReference type="InterPro" id="IPR035908">
    <property type="entry name" value="F0_ATP_A_sf"/>
</dbReference>
<dbReference type="NCBIfam" id="TIGR01131">
    <property type="entry name" value="ATP_synt_6_or_A"/>
    <property type="match status" value="1"/>
</dbReference>
<dbReference type="NCBIfam" id="NF004477">
    <property type="entry name" value="PRK05815.1-1"/>
    <property type="match status" value="1"/>
</dbReference>
<dbReference type="PANTHER" id="PTHR42823">
    <property type="entry name" value="ATP SYNTHASE SUBUNIT A, CHLOROPLASTIC"/>
    <property type="match status" value="1"/>
</dbReference>
<dbReference type="PANTHER" id="PTHR42823:SF3">
    <property type="entry name" value="ATP SYNTHASE SUBUNIT A, CHLOROPLASTIC"/>
    <property type="match status" value="1"/>
</dbReference>
<dbReference type="Pfam" id="PF00119">
    <property type="entry name" value="ATP-synt_A"/>
    <property type="match status" value="1"/>
</dbReference>
<dbReference type="PRINTS" id="PR00123">
    <property type="entry name" value="ATPASEA"/>
</dbReference>
<dbReference type="SUPFAM" id="SSF81336">
    <property type="entry name" value="F1F0 ATP synthase subunit A"/>
    <property type="match status" value="1"/>
</dbReference>
<dbReference type="PROSITE" id="PS00449">
    <property type="entry name" value="ATPASE_A"/>
    <property type="match status" value="1"/>
</dbReference>